<name>AP4M_ARATH</name>
<dbReference type="EMBL" id="AL035356">
    <property type="protein sequence ID" value="CAA23008.1"/>
    <property type="molecule type" value="Genomic_DNA"/>
</dbReference>
<dbReference type="EMBL" id="AL161561">
    <property type="protein sequence ID" value="CAB79365.1"/>
    <property type="molecule type" value="Genomic_DNA"/>
</dbReference>
<dbReference type="EMBL" id="CP002687">
    <property type="protein sequence ID" value="AEE84924.1"/>
    <property type="molecule type" value="Genomic_DNA"/>
</dbReference>
<dbReference type="EMBL" id="AY072171">
    <property type="protein sequence ID" value="AAL59993.1"/>
    <property type="molecule type" value="mRNA"/>
</dbReference>
<dbReference type="PIR" id="T05579">
    <property type="entry name" value="T05579"/>
</dbReference>
<dbReference type="RefSeq" id="NP_194186.1">
    <molecule id="Q9SB50-1"/>
    <property type="nucleotide sequence ID" value="NM_118588.7"/>
</dbReference>
<dbReference type="SMR" id="Q9SB50"/>
<dbReference type="FunCoup" id="Q9SB50">
    <property type="interactions" value="4462"/>
</dbReference>
<dbReference type="STRING" id="3702.Q9SB50"/>
<dbReference type="GlyGen" id="Q9SB50">
    <property type="glycosylation" value="1 site"/>
</dbReference>
<dbReference type="iPTMnet" id="Q9SB50"/>
<dbReference type="PaxDb" id="3702-AT4G24550.2"/>
<dbReference type="ProMEX" id="Q9SB50"/>
<dbReference type="ProteomicsDB" id="224555">
    <molecule id="Q9SB50-1"/>
</dbReference>
<dbReference type="EnsemblPlants" id="AT4G24550.2">
    <molecule id="Q9SB50-1"/>
    <property type="protein sequence ID" value="AT4G24550.2"/>
    <property type="gene ID" value="AT4G24550"/>
</dbReference>
<dbReference type="GeneID" id="828557"/>
<dbReference type="Gramene" id="AT4G24550.2">
    <molecule id="Q9SB50-1"/>
    <property type="protein sequence ID" value="AT4G24550.2"/>
    <property type="gene ID" value="AT4G24550"/>
</dbReference>
<dbReference type="KEGG" id="ath:AT4G24550"/>
<dbReference type="Araport" id="AT4G24550"/>
<dbReference type="TAIR" id="AT4G24550">
    <property type="gene designation" value="AP4M"/>
</dbReference>
<dbReference type="eggNOG" id="KOG0937">
    <property type="taxonomic scope" value="Eukaryota"/>
</dbReference>
<dbReference type="HOGENOM" id="CLU_026996_5_2_1"/>
<dbReference type="InParanoid" id="Q9SB50"/>
<dbReference type="OMA" id="DYGYIQN"/>
<dbReference type="OrthoDB" id="10259133at2759"/>
<dbReference type="PhylomeDB" id="Q9SB50"/>
<dbReference type="PRO" id="PR:Q9SB50"/>
<dbReference type="Proteomes" id="UP000006548">
    <property type="component" value="Chromosome 4"/>
</dbReference>
<dbReference type="ExpressionAtlas" id="Q9SB50">
    <property type="expression patterns" value="baseline and differential"/>
</dbReference>
<dbReference type="GO" id="GO:0030124">
    <property type="term" value="C:AP-4 adaptor complex"/>
    <property type="evidence" value="ECO:0000353"/>
    <property type="project" value="TAIR"/>
</dbReference>
<dbReference type="GO" id="GO:0030131">
    <property type="term" value="C:clathrin adaptor complex"/>
    <property type="evidence" value="ECO:0007669"/>
    <property type="project" value="InterPro"/>
</dbReference>
<dbReference type="GO" id="GO:0005905">
    <property type="term" value="C:clathrin-coated pit"/>
    <property type="evidence" value="ECO:0007669"/>
    <property type="project" value="UniProtKB-KW"/>
</dbReference>
<dbReference type="GO" id="GO:0005829">
    <property type="term" value="C:cytosol"/>
    <property type="evidence" value="ECO:0007005"/>
    <property type="project" value="TAIR"/>
</dbReference>
<dbReference type="GO" id="GO:0005802">
    <property type="term" value="C:trans-Golgi network"/>
    <property type="evidence" value="ECO:0000314"/>
    <property type="project" value="TAIR"/>
</dbReference>
<dbReference type="GO" id="GO:0006886">
    <property type="term" value="P:intracellular protein transport"/>
    <property type="evidence" value="ECO:0007669"/>
    <property type="project" value="InterPro"/>
</dbReference>
<dbReference type="GO" id="GO:0016192">
    <property type="term" value="P:vesicle-mediated transport"/>
    <property type="evidence" value="ECO:0007669"/>
    <property type="project" value="InterPro"/>
</dbReference>
<dbReference type="CDD" id="cd09253">
    <property type="entry name" value="AP-4_Mu4_Cterm"/>
    <property type="match status" value="1"/>
</dbReference>
<dbReference type="CDD" id="cd14838">
    <property type="entry name" value="AP4_Mu_N"/>
    <property type="match status" value="1"/>
</dbReference>
<dbReference type="FunFam" id="3.30.450.60:FF:000002">
    <property type="entry name" value="AP-2 complex subunit mu, putative"/>
    <property type="match status" value="1"/>
</dbReference>
<dbReference type="Gene3D" id="3.30.450.60">
    <property type="match status" value="1"/>
</dbReference>
<dbReference type="Gene3D" id="2.60.40.1170">
    <property type="entry name" value="Mu homology domain, subdomain B"/>
    <property type="match status" value="2"/>
</dbReference>
<dbReference type="InterPro" id="IPR050431">
    <property type="entry name" value="Adaptor_comp_med_subunit"/>
</dbReference>
<dbReference type="InterPro" id="IPR036168">
    <property type="entry name" value="AP2_Mu_C_sf"/>
</dbReference>
<dbReference type="InterPro" id="IPR022775">
    <property type="entry name" value="AP_mu_sigma_su"/>
</dbReference>
<dbReference type="InterPro" id="IPR001392">
    <property type="entry name" value="Clathrin_mu"/>
</dbReference>
<dbReference type="InterPro" id="IPR011012">
    <property type="entry name" value="Longin-like_dom_sf"/>
</dbReference>
<dbReference type="InterPro" id="IPR028565">
    <property type="entry name" value="MHD"/>
</dbReference>
<dbReference type="PANTHER" id="PTHR10529">
    <property type="entry name" value="AP COMPLEX SUBUNIT MU"/>
    <property type="match status" value="1"/>
</dbReference>
<dbReference type="Pfam" id="PF00928">
    <property type="entry name" value="Adap_comp_sub"/>
    <property type="match status" value="1"/>
</dbReference>
<dbReference type="Pfam" id="PF01217">
    <property type="entry name" value="Clat_adaptor_s"/>
    <property type="match status" value="1"/>
</dbReference>
<dbReference type="PIRSF" id="PIRSF005992">
    <property type="entry name" value="Clathrin_mu"/>
    <property type="match status" value="1"/>
</dbReference>
<dbReference type="PRINTS" id="PR00314">
    <property type="entry name" value="CLATHRINADPT"/>
</dbReference>
<dbReference type="SUPFAM" id="SSF49447">
    <property type="entry name" value="Second domain of Mu2 adaptin subunit (ap50) of ap2 adaptor"/>
    <property type="match status" value="1"/>
</dbReference>
<dbReference type="SUPFAM" id="SSF64356">
    <property type="entry name" value="SNARE-like"/>
    <property type="match status" value="1"/>
</dbReference>
<dbReference type="PROSITE" id="PS51072">
    <property type="entry name" value="MHD"/>
    <property type="match status" value="1"/>
</dbReference>
<evidence type="ECO:0000250" key="1"/>
<evidence type="ECO:0000255" key="2">
    <source>
        <dbReference type="PROSITE-ProRule" id="PRU00404"/>
    </source>
</evidence>
<evidence type="ECO:0000305" key="3"/>
<reference key="1">
    <citation type="journal article" date="1999" name="Nature">
        <title>Sequence and analysis of chromosome 4 of the plant Arabidopsis thaliana.</title>
        <authorList>
            <person name="Mayer K.F.X."/>
            <person name="Schueller C."/>
            <person name="Wambutt R."/>
            <person name="Murphy G."/>
            <person name="Volckaert G."/>
            <person name="Pohl T."/>
            <person name="Duesterhoeft A."/>
            <person name="Stiekema W."/>
            <person name="Entian K.-D."/>
            <person name="Terryn N."/>
            <person name="Harris B."/>
            <person name="Ansorge W."/>
            <person name="Brandt P."/>
            <person name="Grivell L.A."/>
            <person name="Rieger M."/>
            <person name="Weichselgartner M."/>
            <person name="de Simone V."/>
            <person name="Obermaier B."/>
            <person name="Mache R."/>
            <person name="Mueller M."/>
            <person name="Kreis M."/>
            <person name="Delseny M."/>
            <person name="Puigdomenech P."/>
            <person name="Watson M."/>
            <person name="Schmidtheini T."/>
            <person name="Reichert B."/>
            <person name="Portetelle D."/>
            <person name="Perez-Alonso M."/>
            <person name="Boutry M."/>
            <person name="Bancroft I."/>
            <person name="Vos P."/>
            <person name="Hoheisel J."/>
            <person name="Zimmermann W."/>
            <person name="Wedler H."/>
            <person name="Ridley P."/>
            <person name="Langham S.-A."/>
            <person name="McCullagh B."/>
            <person name="Bilham L."/>
            <person name="Robben J."/>
            <person name="van der Schueren J."/>
            <person name="Grymonprez B."/>
            <person name="Chuang Y.-J."/>
            <person name="Vandenbussche F."/>
            <person name="Braeken M."/>
            <person name="Weltjens I."/>
            <person name="Voet M."/>
            <person name="Bastiaens I."/>
            <person name="Aert R."/>
            <person name="Defoor E."/>
            <person name="Weitzenegger T."/>
            <person name="Bothe G."/>
            <person name="Ramsperger U."/>
            <person name="Hilbert H."/>
            <person name="Braun M."/>
            <person name="Holzer E."/>
            <person name="Brandt A."/>
            <person name="Peters S."/>
            <person name="van Staveren M."/>
            <person name="Dirkse W."/>
            <person name="Mooijman P."/>
            <person name="Klein Lankhorst R."/>
            <person name="Rose M."/>
            <person name="Hauf J."/>
            <person name="Koetter P."/>
            <person name="Berneiser S."/>
            <person name="Hempel S."/>
            <person name="Feldpausch M."/>
            <person name="Lamberth S."/>
            <person name="Van den Daele H."/>
            <person name="De Keyser A."/>
            <person name="Buysshaert C."/>
            <person name="Gielen J."/>
            <person name="Villarroel R."/>
            <person name="De Clercq R."/>
            <person name="van Montagu M."/>
            <person name="Rogers J."/>
            <person name="Cronin A."/>
            <person name="Quail M.A."/>
            <person name="Bray-Allen S."/>
            <person name="Clark L."/>
            <person name="Doggett J."/>
            <person name="Hall S."/>
            <person name="Kay M."/>
            <person name="Lennard N."/>
            <person name="McLay K."/>
            <person name="Mayes R."/>
            <person name="Pettett A."/>
            <person name="Rajandream M.A."/>
            <person name="Lyne M."/>
            <person name="Benes V."/>
            <person name="Rechmann S."/>
            <person name="Borkova D."/>
            <person name="Bloecker H."/>
            <person name="Scharfe M."/>
            <person name="Grimm M."/>
            <person name="Loehnert T.-H."/>
            <person name="Dose S."/>
            <person name="de Haan M."/>
            <person name="Maarse A.C."/>
            <person name="Schaefer M."/>
            <person name="Mueller-Auer S."/>
            <person name="Gabel C."/>
            <person name="Fuchs M."/>
            <person name="Fartmann B."/>
            <person name="Granderath K."/>
            <person name="Dauner D."/>
            <person name="Herzl A."/>
            <person name="Neumann S."/>
            <person name="Argiriou A."/>
            <person name="Vitale D."/>
            <person name="Liguori R."/>
            <person name="Piravandi E."/>
            <person name="Massenet O."/>
            <person name="Quigley F."/>
            <person name="Clabauld G."/>
            <person name="Muendlein A."/>
            <person name="Felber R."/>
            <person name="Schnabl S."/>
            <person name="Hiller R."/>
            <person name="Schmidt W."/>
            <person name="Lecharny A."/>
            <person name="Aubourg S."/>
            <person name="Chefdor F."/>
            <person name="Cooke R."/>
            <person name="Berger C."/>
            <person name="Monfort A."/>
            <person name="Casacuberta E."/>
            <person name="Gibbons T."/>
            <person name="Weber N."/>
            <person name="Vandenbol M."/>
            <person name="Bargues M."/>
            <person name="Terol J."/>
            <person name="Torres A."/>
            <person name="Perez-Perez A."/>
            <person name="Purnelle B."/>
            <person name="Bent E."/>
            <person name="Johnson S."/>
            <person name="Tacon D."/>
            <person name="Jesse T."/>
            <person name="Heijnen L."/>
            <person name="Schwarz S."/>
            <person name="Scholler P."/>
            <person name="Heber S."/>
            <person name="Francs P."/>
            <person name="Bielke C."/>
            <person name="Frishman D."/>
            <person name="Haase D."/>
            <person name="Lemcke K."/>
            <person name="Mewes H.-W."/>
            <person name="Stocker S."/>
            <person name="Zaccaria P."/>
            <person name="Bevan M."/>
            <person name="Wilson R.K."/>
            <person name="de la Bastide M."/>
            <person name="Habermann K."/>
            <person name="Parnell L."/>
            <person name="Dedhia N."/>
            <person name="Gnoj L."/>
            <person name="Schutz K."/>
            <person name="Huang E."/>
            <person name="Spiegel L."/>
            <person name="Sekhon M."/>
            <person name="Murray J."/>
            <person name="Sheet P."/>
            <person name="Cordes M."/>
            <person name="Abu-Threideh J."/>
            <person name="Stoneking T."/>
            <person name="Kalicki J."/>
            <person name="Graves T."/>
            <person name="Harmon G."/>
            <person name="Edwards J."/>
            <person name="Latreille P."/>
            <person name="Courtney L."/>
            <person name="Cloud J."/>
            <person name="Abbott A."/>
            <person name="Scott K."/>
            <person name="Johnson D."/>
            <person name="Minx P."/>
            <person name="Bentley D."/>
            <person name="Fulton B."/>
            <person name="Miller N."/>
            <person name="Greco T."/>
            <person name="Kemp K."/>
            <person name="Kramer J."/>
            <person name="Fulton L."/>
            <person name="Mardis E."/>
            <person name="Dante M."/>
            <person name="Pepin K."/>
            <person name="Hillier L.W."/>
            <person name="Nelson J."/>
            <person name="Spieth J."/>
            <person name="Ryan E."/>
            <person name="Andrews S."/>
            <person name="Geisel C."/>
            <person name="Layman D."/>
            <person name="Du H."/>
            <person name="Ali J."/>
            <person name="Berghoff A."/>
            <person name="Jones K."/>
            <person name="Drone K."/>
            <person name="Cotton M."/>
            <person name="Joshu C."/>
            <person name="Antonoiu B."/>
            <person name="Zidanic M."/>
            <person name="Strong C."/>
            <person name="Sun H."/>
            <person name="Lamar B."/>
            <person name="Yordan C."/>
            <person name="Ma P."/>
            <person name="Zhong J."/>
            <person name="Preston R."/>
            <person name="Vil D."/>
            <person name="Shekher M."/>
            <person name="Matero A."/>
            <person name="Shah R."/>
            <person name="Swaby I.K."/>
            <person name="O'Shaughnessy A."/>
            <person name="Rodriguez M."/>
            <person name="Hoffman J."/>
            <person name="Till S."/>
            <person name="Granat S."/>
            <person name="Shohdy N."/>
            <person name="Hasegawa A."/>
            <person name="Hameed A."/>
            <person name="Lodhi M."/>
            <person name="Johnson A."/>
            <person name="Chen E."/>
            <person name="Marra M.A."/>
            <person name="Martienssen R."/>
            <person name="McCombie W.R."/>
        </authorList>
    </citation>
    <scope>NUCLEOTIDE SEQUENCE [LARGE SCALE GENOMIC DNA]</scope>
    <source>
        <strain>cv. Columbia</strain>
    </source>
</reference>
<reference key="2">
    <citation type="journal article" date="2017" name="Plant J.">
        <title>Araport11: a complete reannotation of the Arabidopsis thaliana reference genome.</title>
        <authorList>
            <person name="Cheng C.Y."/>
            <person name="Krishnakumar V."/>
            <person name="Chan A.P."/>
            <person name="Thibaud-Nissen F."/>
            <person name="Schobel S."/>
            <person name="Town C.D."/>
        </authorList>
    </citation>
    <scope>GENOME REANNOTATION</scope>
    <source>
        <strain>cv. Columbia</strain>
    </source>
</reference>
<reference key="3">
    <citation type="journal article" date="2003" name="Science">
        <title>Empirical analysis of transcriptional activity in the Arabidopsis genome.</title>
        <authorList>
            <person name="Yamada K."/>
            <person name="Lim J."/>
            <person name="Dale J.M."/>
            <person name="Chen H."/>
            <person name="Shinn P."/>
            <person name="Palm C.J."/>
            <person name="Southwick A.M."/>
            <person name="Wu H.C."/>
            <person name="Kim C.J."/>
            <person name="Nguyen M."/>
            <person name="Pham P.K."/>
            <person name="Cheuk R.F."/>
            <person name="Karlin-Newmann G."/>
            <person name="Liu S.X."/>
            <person name="Lam B."/>
            <person name="Sakano H."/>
            <person name="Wu T."/>
            <person name="Yu G."/>
            <person name="Miranda M."/>
            <person name="Quach H.L."/>
            <person name="Tripp M."/>
            <person name="Chang C.H."/>
            <person name="Lee J.M."/>
            <person name="Toriumi M.J."/>
            <person name="Chan M.M."/>
            <person name="Tang C.C."/>
            <person name="Onodera C.S."/>
            <person name="Deng J.M."/>
            <person name="Akiyama K."/>
            <person name="Ansari Y."/>
            <person name="Arakawa T."/>
            <person name="Banh J."/>
            <person name="Banno F."/>
            <person name="Bowser L."/>
            <person name="Brooks S.Y."/>
            <person name="Carninci P."/>
            <person name="Chao Q."/>
            <person name="Choy N."/>
            <person name="Enju A."/>
            <person name="Goldsmith A.D."/>
            <person name="Gurjal M."/>
            <person name="Hansen N.F."/>
            <person name="Hayashizaki Y."/>
            <person name="Johnson-Hopson C."/>
            <person name="Hsuan V.W."/>
            <person name="Iida K."/>
            <person name="Karnes M."/>
            <person name="Khan S."/>
            <person name="Koesema E."/>
            <person name="Ishida J."/>
            <person name="Jiang P.X."/>
            <person name="Jones T."/>
            <person name="Kawai J."/>
            <person name="Kamiya A."/>
            <person name="Meyers C."/>
            <person name="Nakajima M."/>
            <person name="Narusaka M."/>
            <person name="Seki M."/>
            <person name="Sakurai T."/>
            <person name="Satou M."/>
            <person name="Tamse R."/>
            <person name="Vaysberg M."/>
            <person name="Wallender E.K."/>
            <person name="Wong C."/>
            <person name="Yamamura Y."/>
            <person name="Yuan S."/>
            <person name="Shinozaki K."/>
            <person name="Davis R.W."/>
            <person name="Theologis A."/>
            <person name="Ecker J.R."/>
        </authorList>
    </citation>
    <scope>NUCLEOTIDE SEQUENCE [LARGE SCALE MRNA]</scope>
    <source>
        <strain>cv. Columbia</strain>
    </source>
</reference>
<reference key="4">
    <citation type="journal article" date="2001" name="Mol. Biol. Cell">
        <title>Adaptins: the final recount.</title>
        <authorList>
            <person name="Boehm M."/>
            <person name="Bonifacino J.S."/>
        </authorList>
    </citation>
    <scope>GENE FAMILY</scope>
    <scope>REVIEW</scope>
</reference>
<reference key="5">
    <citation type="journal article" date="2004" name="Plant J.">
        <title>Arabidopsis muA-adaptin interacts with the tyrosine motif of the vacuolar sorting receptor VSR-PS1.</title>
        <authorList>
            <person name="Happel N."/>
            <person name="Hoening S."/>
            <person name="Neuhaus J.M."/>
            <person name="Paris N."/>
            <person name="Robinson D.G."/>
            <person name="Holstein S.E."/>
        </authorList>
    </citation>
    <scope>GENE FAMILY</scope>
</reference>
<accession>Q9SB50</accession>
<keyword id="KW-0025">Alternative splicing</keyword>
<keyword id="KW-0168">Coated pit</keyword>
<keyword id="KW-0333">Golgi apparatus</keyword>
<keyword id="KW-0472">Membrane</keyword>
<keyword id="KW-0653">Protein transport</keyword>
<keyword id="KW-1185">Reference proteome</keyword>
<keyword id="KW-0813">Transport</keyword>
<sequence length="451" mass="50946">MMISQFFVLSQRGDNIVFRDYRAEVPKGSTETFFRKVKFWKEDGNAEAPPIFNVDGVNYFHVKVVGLYFVATTRVNVSPSLVLELLQRIARVIKDYLGVLNEDSFRKNFVLVYELLDEVIDFGYVQTTSTEVLKSYIFNEPIVVSPARLQPIDPAAIFTQGAKRMPGTAVTKSVVANDPGGRRREEIFVDIIEKISVTFSSSGYILTSEIDGTIQMKSYLSGNPEIRLALNEDLNIGRGGRSVYDYRSSSGSGVILDDCNFHESVRLDSFDSDRTLSLVPPDGEFPVMNYRMTQEFKPPFHVNTLIEEAGRLKAEVIIKIRAEFPSDIIANTITVQMPLPNYTSRASFELEPGAAGQRTDFKESNKMLEWNLKKIVGGGEHTLRAKLTFSQEFHGNITKEAGPVSMTFTIPMYNVSKLQVKYLQIAKKSSSYNPYRWVRYVTQANSYVARI</sequence>
<gene>
    <name type="primary">AP4M</name>
    <name type="synonym">CLH</name>
    <name type="ordered locus">At4g24550</name>
    <name type="ORF">F22K18.250</name>
</gene>
<protein>
    <recommendedName>
        <fullName>AP-4 complex subunit mu</fullName>
    </recommendedName>
    <alternativeName>
        <fullName>Adaptor protein complex AP-4 subunit mu</fullName>
    </alternativeName>
    <alternativeName>
        <fullName>Adaptor protein-4 mu-adaptin</fullName>
    </alternativeName>
    <alternativeName>
        <fullName>Adaptor-related protein complex 4 subunit mu</fullName>
    </alternativeName>
    <alternativeName>
        <fullName>At-muC-Ad</fullName>
    </alternativeName>
    <alternativeName>
        <fullName>Mu4-adaptin</fullName>
    </alternativeName>
</protein>
<proteinExistence type="evidence at transcript level"/>
<organism>
    <name type="scientific">Arabidopsis thaliana</name>
    <name type="common">Mouse-ear cress</name>
    <dbReference type="NCBI Taxonomy" id="3702"/>
    <lineage>
        <taxon>Eukaryota</taxon>
        <taxon>Viridiplantae</taxon>
        <taxon>Streptophyta</taxon>
        <taxon>Embryophyta</taxon>
        <taxon>Tracheophyta</taxon>
        <taxon>Spermatophyta</taxon>
        <taxon>Magnoliopsida</taxon>
        <taxon>eudicotyledons</taxon>
        <taxon>Gunneridae</taxon>
        <taxon>Pentapetalae</taxon>
        <taxon>rosids</taxon>
        <taxon>malvids</taxon>
        <taxon>Brassicales</taxon>
        <taxon>Brassicaceae</taxon>
        <taxon>Camelineae</taxon>
        <taxon>Arabidopsis</taxon>
    </lineage>
</organism>
<comment type="function">
    <text evidence="1">Subunit of novel type of clathrin- or non-clathrin-associated protein coat involved in targeting proteins from the trans-Golgi network (TGN) to the endosomal-lysosomal system.</text>
</comment>
<comment type="subunit">
    <text evidence="1">Adaptor protein complex 4 (AP-4) is a heterotetramer composed of two large adaptins (epsilon-type subunit and beta-type subunit), a medium adaptin (mu-type subunit) and a small adaptin (sigma-type subunit).</text>
</comment>
<comment type="subcellular location">
    <subcellularLocation>
        <location evidence="1">Golgi apparatus</location>
        <location evidence="1">trans-Golgi network</location>
    </subcellularLocation>
    <subcellularLocation>
        <location evidence="1">Membrane</location>
        <location evidence="1">Coated pit</location>
    </subcellularLocation>
    <text evidence="1">Associated with the trans-Golgi network.</text>
</comment>
<comment type="alternative products">
    <event type="alternative splicing"/>
    <isoform>
        <id>Q9SB50-1</id>
        <name>1</name>
        <sequence type="displayed"/>
    </isoform>
    <text>A number of isoforms are produced. According to EST sequences.</text>
</comment>
<comment type="similarity">
    <text evidence="3">Belongs to the adaptor complexes medium subunit family.</text>
</comment>
<feature type="chain" id="PRO_0000424264" description="AP-4 complex subunit mu">
    <location>
        <begin position="1"/>
        <end position="451"/>
    </location>
</feature>
<feature type="domain" description="MHD" evidence="2">
    <location>
        <begin position="184"/>
        <end position="450"/>
    </location>
</feature>